<protein>
    <recommendedName>
        <fullName evidence="1">Ribonuclease Y</fullName>
        <shortName evidence="1">RNase Y</shortName>
        <ecNumber evidence="1">3.1.-.-</ecNumber>
    </recommendedName>
</protein>
<feature type="chain" id="PRO_0000344966" description="Ribonuclease Y">
    <location>
        <begin position="1"/>
        <end position="507"/>
    </location>
</feature>
<feature type="transmembrane region" description="Helical" evidence="1">
    <location>
        <begin position="1"/>
        <end position="21"/>
    </location>
</feature>
<feature type="domain" description="KH" evidence="1">
    <location>
        <begin position="197"/>
        <end position="282"/>
    </location>
</feature>
<feature type="domain" description="HD" evidence="2">
    <location>
        <begin position="323"/>
        <end position="416"/>
    </location>
</feature>
<dbReference type="EC" id="3.1.-.-" evidence="1"/>
<dbReference type="EMBL" id="CP000702">
    <property type="protein sequence ID" value="ABQ46958.1"/>
    <property type="molecule type" value="Genomic_DNA"/>
</dbReference>
<dbReference type="STRING" id="390874.Tpet_0940"/>
<dbReference type="KEGG" id="tpt:Tpet_0940"/>
<dbReference type="eggNOG" id="COG1418">
    <property type="taxonomic scope" value="Bacteria"/>
</dbReference>
<dbReference type="HOGENOM" id="CLU_028328_1_0_0"/>
<dbReference type="Proteomes" id="UP000006558">
    <property type="component" value="Chromosome"/>
</dbReference>
<dbReference type="GO" id="GO:0005886">
    <property type="term" value="C:plasma membrane"/>
    <property type="evidence" value="ECO:0007669"/>
    <property type="project" value="UniProtKB-SubCell"/>
</dbReference>
<dbReference type="GO" id="GO:0003723">
    <property type="term" value="F:RNA binding"/>
    <property type="evidence" value="ECO:0007669"/>
    <property type="project" value="UniProtKB-UniRule"/>
</dbReference>
<dbReference type="GO" id="GO:0004521">
    <property type="term" value="F:RNA endonuclease activity"/>
    <property type="evidence" value="ECO:0007669"/>
    <property type="project" value="UniProtKB-UniRule"/>
</dbReference>
<dbReference type="GO" id="GO:0006402">
    <property type="term" value="P:mRNA catabolic process"/>
    <property type="evidence" value="ECO:0007669"/>
    <property type="project" value="UniProtKB-UniRule"/>
</dbReference>
<dbReference type="CDD" id="cd00077">
    <property type="entry name" value="HDc"/>
    <property type="match status" value="1"/>
</dbReference>
<dbReference type="CDD" id="cd22431">
    <property type="entry name" value="KH-I_RNaseY"/>
    <property type="match status" value="1"/>
</dbReference>
<dbReference type="FunFam" id="1.10.3210.10:FF:000022">
    <property type="entry name" value="Ribonuclease Y"/>
    <property type="match status" value="1"/>
</dbReference>
<dbReference type="Gene3D" id="1.10.3210.10">
    <property type="entry name" value="Hypothetical protein af1432"/>
    <property type="match status" value="1"/>
</dbReference>
<dbReference type="Gene3D" id="3.30.1370.10">
    <property type="entry name" value="K Homology domain, type 1"/>
    <property type="match status" value="1"/>
</dbReference>
<dbReference type="HAMAP" id="MF_00335">
    <property type="entry name" value="RNase_Y"/>
    <property type="match status" value="1"/>
</dbReference>
<dbReference type="InterPro" id="IPR003607">
    <property type="entry name" value="HD/PDEase_dom"/>
</dbReference>
<dbReference type="InterPro" id="IPR006674">
    <property type="entry name" value="HD_domain"/>
</dbReference>
<dbReference type="InterPro" id="IPR006675">
    <property type="entry name" value="HDIG_dom"/>
</dbReference>
<dbReference type="InterPro" id="IPR004087">
    <property type="entry name" value="KH_dom"/>
</dbReference>
<dbReference type="InterPro" id="IPR004088">
    <property type="entry name" value="KH_dom_type_1"/>
</dbReference>
<dbReference type="InterPro" id="IPR036612">
    <property type="entry name" value="KH_dom_type_1_sf"/>
</dbReference>
<dbReference type="InterPro" id="IPR017705">
    <property type="entry name" value="Ribonuclease_Y"/>
</dbReference>
<dbReference type="InterPro" id="IPR022711">
    <property type="entry name" value="RNase_Y_N"/>
</dbReference>
<dbReference type="NCBIfam" id="TIGR00277">
    <property type="entry name" value="HDIG"/>
    <property type="match status" value="1"/>
</dbReference>
<dbReference type="NCBIfam" id="TIGR03319">
    <property type="entry name" value="RNase_Y"/>
    <property type="match status" value="1"/>
</dbReference>
<dbReference type="PANTHER" id="PTHR12826">
    <property type="entry name" value="RIBONUCLEASE Y"/>
    <property type="match status" value="1"/>
</dbReference>
<dbReference type="PANTHER" id="PTHR12826:SF15">
    <property type="entry name" value="RIBONUCLEASE Y"/>
    <property type="match status" value="1"/>
</dbReference>
<dbReference type="Pfam" id="PF01966">
    <property type="entry name" value="HD"/>
    <property type="match status" value="1"/>
</dbReference>
<dbReference type="Pfam" id="PF00013">
    <property type="entry name" value="KH_1"/>
    <property type="match status" value="1"/>
</dbReference>
<dbReference type="Pfam" id="PF12072">
    <property type="entry name" value="RNase_Y_N"/>
    <property type="match status" value="1"/>
</dbReference>
<dbReference type="SMART" id="SM00471">
    <property type="entry name" value="HDc"/>
    <property type="match status" value="1"/>
</dbReference>
<dbReference type="SMART" id="SM00322">
    <property type="entry name" value="KH"/>
    <property type="match status" value="1"/>
</dbReference>
<dbReference type="SUPFAM" id="SSF54791">
    <property type="entry name" value="Eukaryotic type KH-domain (KH-domain type I)"/>
    <property type="match status" value="1"/>
</dbReference>
<dbReference type="SUPFAM" id="SSF109604">
    <property type="entry name" value="HD-domain/PDEase-like"/>
    <property type="match status" value="1"/>
</dbReference>
<dbReference type="PROSITE" id="PS51831">
    <property type="entry name" value="HD"/>
    <property type="match status" value="1"/>
</dbReference>
<dbReference type="PROSITE" id="PS50084">
    <property type="entry name" value="KH_TYPE_1"/>
    <property type="match status" value="1"/>
</dbReference>
<evidence type="ECO:0000255" key="1">
    <source>
        <dbReference type="HAMAP-Rule" id="MF_00335"/>
    </source>
</evidence>
<evidence type="ECO:0000255" key="2">
    <source>
        <dbReference type="PROSITE-ProRule" id="PRU01175"/>
    </source>
</evidence>
<sequence length="507" mass="58098">MLWYIVAGAGGLLIGYLIASYQINQKLRKAKEDAQTIIEKAEKEANEIKKKAIIEGREEVHRLREEFEKERSRREEELRAFEERILKREELLTRKEENLEKREHQIEELKANLEEKMREVEEKEKRIDEELKRLAGMTVEEARELILEEARQRYEHDLAKLYKEMKEQVEEEVEKEAKKVIAFAVQRYAPDYVGEITVSTVSLPSDDMKGRIIGREGRNIRTFEKITGVDLIIDDTPEVVVLSCFNPLRREIARITLEKLVADGRIHPARIEEMYEKAKQEVEKAIKEAGQEATFKAGVMGLHPELVKLLGKLKYRTSYGQNVLNHSIEVALLAGYMASELGLNADKARRGGLLHDIGKAVDQELEGSHTTIGAELARRYGEKEDIINMILSHHGEEEPMTPEAVLVAAADALSAARPGARRESLENYIKRLMKLEEIAKSFKYVEKAYAIQAGREIRVIVEPDKVDDALAEKLAYDISKKIEEELEYPGVLKVVVIREKRSVAYAK</sequence>
<proteinExistence type="inferred from homology"/>
<comment type="function">
    <text evidence="1">Endoribonuclease that initiates mRNA decay.</text>
</comment>
<comment type="subcellular location">
    <subcellularLocation>
        <location evidence="1">Cell membrane</location>
        <topology evidence="1">Single-pass membrane protein</topology>
    </subcellularLocation>
</comment>
<comment type="similarity">
    <text evidence="1">Belongs to the RNase Y family.</text>
</comment>
<gene>
    <name evidence="1" type="primary">rny</name>
    <name type="ordered locus">Tpet_0940</name>
</gene>
<organism>
    <name type="scientific">Thermotoga petrophila (strain ATCC BAA-488 / DSM 13995 / JCM 10881 / RKU-1)</name>
    <dbReference type="NCBI Taxonomy" id="390874"/>
    <lineage>
        <taxon>Bacteria</taxon>
        <taxon>Thermotogati</taxon>
        <taxon>Thermotogota</taxon>
        <taxon>Thermotogae</taxon>
        <taxon>Thermotogales</taxon>
        <taxon>Thermotogaceae</taxon>
        <taxon>Thermotoga</taxon>
    </lineage>
</organism>
<keyword id="KW-1003">Cell membrane</keyword>
<keyword id="KW-0255">Endonuclease</keyword>
<keyword id="KW-0378">Hydrolase</keyword>
<keyword id="KW-0472">Membrane</keyword>
<keyword id="KW-0540">Nuclease</keyword>
<keyword id="KW-0694">RNA-binding</keyword>
<keyword id="KW-0812">Transmembrane</keyword>
<keyword id="KW-1133">Transmembrane helix</keyword>
<name>RNY_THEP1</name>
<accession>A5IL85</accession>
<reference key="1">
    <citation type="submission" date="2007-05" db="EMBL/GenBank/DDBJ databases">
        <title>Complete sequence of Thermotoga petrophila RKU-1.</title>
        <authorList>
            <consortium name="US DOE Joint Genome Institute"/>
            <person name="Copeland A."/>
            <person name="Lucas S."/>
            <person name="Lapidus A."/>
            <person name="Barry K."/>
            <person name="Glavina del Rio T."/>
            <person name="Dalin E."/>
            <person name="Tice H."/>
            <person name="Pitluck S."/>
            <person name="Sims D."/>
            <person name="Brettin T."/>
            <person name="Bruce D."/>
            <person name="Detter J.C."/>
            <person name="Han C."/>
            <person name="Tapia R."/>
            <person name="Schmutz J."/>
            <person name="Larimer F."/>
            <person name="Land M."/>
            <person name="Hauser L."/>
            <person name="Kyrpides N."/>
            <person name="Mikhailova N."/>
            <person name="Nelson K."/>
            <person name="Gogarten J.P."/>
            <person name="Noll K."/>
            <person name="Richardson P."/>
        </authorList>
    </citation>
    <scope>NUCLEOTIDE SEQUENCE [LARGE SCALE GENOMIC DNA]</scope>
    <source>
        <strain>ATCC BAA-488 / DSM 13995 / JCM 10881 / RKU-1</strain>
    </source>
</reference>